<organism>
    <name type="scientific">Human astrovirus-1</name>
    <name type="common">HAstV-1</name>
    <dbReference type="NCBI Taxonomy" id="12456"/>
    <lineage>
        <taxon>Viruses</taxon>
        <taxon>Riboviria</taxon>
        <taxon>Orthornavirae</taxon>
        <taxon>Pisuviricota</taxon>
        <taxon>Stelpaviricetes</taxon>
        <taxon>Stellavirales</taxon>
        <taxon>Astroviridae</taxon>
        <taxon>Mamastrovirus</taxon>
        <taxon>Mamastrovirus 1</taxon>
    </lineage>
</organism>
<gene>
    <name type="primary">ORF1</name>
</gene>
<sequence>MAYGEPYYSSKPDKDFNFGSTMARRQMTPTMVTKLPKFVRNSPQAYDWIVRGLIFPTIGKTYFQRVVVITGGLEDGTYGSFAFDGKEWVGIYPIEHLNLMSSLKLIHKANALQERLRLSQEEKATLALDVQFLQHENVRLKEMIPKPEPRKIQMKWIIMGAVLTFLSLIPGGYAHSQTNNTIFTDMIAACKYSTETLTENLDLRIKLALANITISDKLDAVRQILNFAFVPRAHWLRTVFYYIHYYEMWNIFMFVLAIGTVMRSARPGTDLVTLATSHLSGFRMAVLPTIPFHTTMTLWVMNTLMVCYYFDNLLAITLAILAPILGIIFLCFMEDSNYVSQIRGLIATAVLIAGGHACLTLTGTTTSLFVVILTCRFIRMATVFIGTRFEIRDANGKVVATVPTRIKNVAFDFFQKLKQSGVRVGVNEFVVIKPGALCVIDTPEGKGTGFFSGNDIVTAAHVVGNNTFVNVCYEGLMYEAKVRYMPEKDIAFLTCPGDLHPTARLKLSKNPDYSCVTVMAYVNEDLVVSTAAAMVHGNTLSYAVRTQDGMSGAPVCDKYGRVLAVHQTNTGYTGGAVIIDPADFHPVKAPSQVELLKEEIERLKAQLNSATENATTVVTQQPSAALEQKSVSDSDVVDLVRTAMEREMKVLRDEINGILAPFLQKKKGKTKHGRGRVRRNLRKGVKLLTEEEYRELLEKGLDRETFLDLIDRIIGERSGYPDYDDEDYYDEDDDGWGMVGDDVEFDYTEVINFDQAKPIPAPRTTKQKICPEPEVESQPLDLSQKKEKQSEYEQQVVKSTKPQQLEHEQQVVKPIKPQKSEPQPYSQTYGKAPIWESYDFDWDEDDAKFILPAPHRLTKADEIVLGSKIVKLRTIIETAIKTQNYSALPEAVFELDKAAYEAGLEGFLQRVKSKNKAPKNYKGPQKTKGPKTTTH</sequence>
<comment type="function">
    <molecule>Serine protease p27</molecule>
    <text evidence="9">Responsible for the cleavage of the polyprotein into functional products.</text>
</comment>
<comment type="function">
    <molecule>Viral genome-linked protein</molecule>
    <text evidence="1">Protein covalently attached to the 5' extremity of the genomic and subgenomic RNAs (By similarity). It may serve as a primer for the replicase (By similarity).</text>
</comment>
<comment type="catalytic activity">
    <reaction>
        <text>RNA(n) + a ribonucleoside 5'-triphosphate = RNA(n+1) + diphosphate</text>
        <dbReference type="Rhea" id="RHEA:21248"/>
        <dbReference type="Rhea" id="RHEA-COMP:14527"/>
        <dbReference type="Rhea" id="RHEA-COMP:17342"/>
        <dbReference type="ChEBI" id="CHEBI:33019"/>
        <dbReference type="ChEBI" id="CHEBI:61557"/>
        <dbReference type="ChEBI" id="CHEBI:140395"/>
    </reaction>
</comment>
<comment type="subunit">
    <molecule>Serine protease p27</molecule>
    <text evidence="5">Monomer.</text>
</comment>
<comment type="subcellular location">
    <molecule>Transmembrane protein 1A</molecule>
    <subcellularLocation>
        <location evidence="7">Host membrane</location>
        <topology evidence="7">Multi-pass membrane protein</topology>
    </subcellularLocation>
</comment>
<comment type="alternative products">
    <event type="ribosomal frameshifting"/>
    <isoform>
        <id>P0C6K4-1</id>
        <name evidence="6">nsp1a</name>
        <sequence type="displayed"/>
    </isoform>
    <isoform>
        <id>Q67726-1</id>
        <name evidence="6">nsp1ab</name>
        <sequence type="external"/>
    </isoform>
</comment>
<comment type="PTM">
    <text evidence="4 9">Cleaved by the viral and host proteases (PubMed:11799197). The protease is probably autocatalytically cleaved (Probable).</text>
</comment>
<comment type="miscellaneous">
    <text evidence="7">The sequence shown is that of isolate Newcastle.</text>
</comment>
<comment type="similarity">
    <text evidence="7">Belongs to the astroviridae polyprotein 1A family.</text>
</comment>
<keyword id="KW-0002">3D-structure</keyword>
<keyword id="KW-0175">Coiled coil</keyword>
<keyword id="KW-0191">Covalent protein-RNA linkage</keyword>
<keyword id="KW-1043">Host membrane</keyword>
<keyword id="KW-0378">Hydrolase</keyword>
<keyword id="KW-0472">Membrane</keyword>
<keyword id="KW-0597">Phosphoprotein</keyword>
<keyword id="KW-0645">Protease</keyword>
<keyword id="KW-1185">Reference proteome</keyword>
<keyword id="KW-0688">Ribosomal frameshifting</keyword>
<keyword id="KW-0720">Serine protease</keyword>
<keyword id="KW-0812">Transmembrane</keyword>
<keyword id="KW-1133">Transmembrane helix</keyword>
<keyword id="KW-0693">Viral RNA replication</keyword>
<dbReference type="EC" id="3.4.21.-" evidence="5"/>
<dbReference type="EMBL" id="Z25771">
    <property type="status" value="NOT_ANNOTATED_CDS"/>
    <property type="molecule type" value="Genomic_RNA"/>
</dbReference>
<dbReference type="EMBL" id="L23513">
    <property type="protein sequence ID" value="AAC34715.1"/>
    <property type="molecule type" value="Genomic_RNA"/>
</dbReference>
<dbReference type="EMBL" id="AY720892">
    <property type="protein sequence ID" value="AAW51880.1"/>
    <property type="molecule type" value="Genomic_RNA"/>
</dbReference>
<dbReference type="PIR" id="A49529">
    <property type="entry name" value="A49529"/>
</dbReference>
<dbReference type="PDB" id="2W5E">
    <property type="method" value="X-ray"/>
    <property type="resolution" value="2.00 A"/>
    <property type="chains" value="A/B/C/D/E/F=432-587"/>
</dbReference>
<dbReference type="PDBsum" id="2W5E"/>
<dbReference type="SMR" id="P0C6K4"/>
<dbReference type="IntAct" id="P0C6K4">
    <property type="interactions" value="1"/>
</dbReference>
<dbReference type="MEROPS" id="S01.109"/>
<dbReference type="EvolutionaryTrace" id="Q3ZN04"/>
<dbReference type="Proteomes" id="UP000001650">
    <property type="component" value="Genome"/>
</dbReference>
<dbReference type="Proteomes" id="UP000109035">
    <property type="component" value="Genome"/>
</dbReference>
<dbReference type="Proteomes" id="UP000159013">
    <property type="component" value="Genome"/>
</dbReference>
<dbReference type="GO" id="GO:0033644">
    <property type="term" value="C:host cell membrane"/>
    <property type="evidence" value="ECO:0007669"/>
    <property type="project" value="UniProtKB-SubCell"/>
</dbReference>
<dbReference type="GO" id="GO:0016020">
    <property type="term" value="C:membrane"/>
    <property type="evidence" value="ECO:0007669"/>
    <property type="project" value="UniProtKB-KW"/>
</dbReference>
<dbReference type="GO" id="GO:0034062">
    <property type="term" value="F:5'-3' RNA polymerase activity"/>
    <property type="evidence" value="ECO:0007669"/>
    <property type="project" value="RHEA"/>
</dbReference>
<dbReference type="GO" id="GO:0004252">
    <property type="term" value="F:serine-type endopeptidase activity"/>
    <property type="evidence" value="ECO:0007669"/>
    <property type="project" value="InterPro"/>
</dbReference>
<dbReference type="GO" id="GO:0070008">
    <property type="term" value="F:serine-type exopeptidase activity"/>
    <property type="evidence" value="ECO:0007669"/>
    <property type="project" value="InterPro"/>
</dbReference>
<dbReference type="GO" id="GO:0006508">
    <property type="term" value="P:proteolysis"/>
    <property type="evidence" value="ECO:0007669"/>
    <property type="project" value="UniProtKB-KW"/>
</dbReference>
<dbReference type="GO" id="GO:0075523">
    <property type="term" value="P:viral translational frameshifting"/>
    <property type="evidence" value="ECO:0007669"/>
    <property type="project" value="UniProtKB-KW"/>
</dbReference>
<dbReference type="Gene3D" id="2.40.10.10">
    <property type="entry name" value="Trypsin-like serine proteases"/>
    <property type="match status" value="2"/>
</dbReference>
<dbReference type="InterPro" id="IPR045835">
    <property type="entry name" value="Astro_1A"/>
</dbReference>
<dbReference type="InterPro" id="IPR045833">
    <property type="entry name" value="Astro_p19"/>
</dbReference>
<dbReference type="InterPro" id="IPR045836">
    <property type="entry name" value="Astro_VPg"/>
</dbReference>
<dbReference type="InterPro" id="IPR022068">
    <property type="entry name" value="Mamastrovirus_p20"/>
</dbReference>
<dbReference type="InterPro" id="IPR009003">
    <property type="entry name" value="Peptidase_S1_PA"/>
</dbReference>
<dbReference type="InterPro" id="IPR043504">
    <property type="entry name" value="Peptidase_S1_PA_chymotrypsin"/>
</dbReference>
<dbReference type="Pfam" id="PF19415">
    <property type="entry name" value="Astro_1A"/>
    <property type="match status" value="1"/>
</dbReference>
<dbReference type="Pfam" id="PF19414">
    <property type="entry name" value="Astro_p19"/>
    <property type="match status" value="1"/>
</dbReference>
<dbReference type="Pfam" id="PF19416">
    <property type="entry name" value="Astro_VPg"/>
    <property type="match status" value="1"/>
</dbReference>
<dbReference type="Pfam" id="PF12285">
    <property type="entry name" value="Astrovir_pp_1"/>
    <property type="match status" value="1"/>
</dbReference>
<dbReference type="Pfam" id="PF13365">
    <property type="entry name" value="Trypsin_2"/>
    <property type="match status" value="1"/>
</dbReference>
<dbReference type="SUPFAM" id="SSF50494">
    <property type="entry name" value="Trypsin-like serine proteases"/>
    <property type="match status" value="1"/>
</dbReference>
<protein>
    <recommendedName>
        <fullName>Non-structural polyprotein 1A</fullName>
    </recommendedName>
    <component>
        <recommendedName>
            <fullName>Protein p19</fullName>
        </recommendedName>
    </component>
    <component>
        <recommendedName>
            <fullName>Transmembrane protein 1A</fullName>
        </recommendedName>
    </component>
    <component>
        <recommendedName>
            <fullName>Serine protease p27</fullName>
            <shortName>p27</shortName>
            <ecNumber evidence="5">3.4.21.-</ecNumber>
        </recommendedName>
    </component>
    <component>
        <recommendedName>
            <fullName>Viral genome-linked protein</fullName>
        </recommendedName>
        <alternativeName>
            <fullName>VPg</fullName>
        </alternativeName>
    </component>
    <component>
        <recommendedName>
            <fullName>Protein p20'</fullName>
        </recommendedName>
    </component>
</protein>
<evidence type="ECO:0000250" key="1">
    <source>
        <dbReference type="UniProtKB" id="Q3ZN07"/>
    </source>
</evidence>
<evidence type="ECO:0000255" key="2"/>
<evidence type="ECO:0000256" key="3">
    <source>
        <dbReference type="SAM" id="MobiDB-lite"/>
    </source>
</evidence>
<evidence type="ECO:0000269" key="4">
    <source>
    </source>
</evidence>
<evidence type="ECO:0000269" key="5">
    <source>
    </source>
</evidence>
<evidence type="ECO:0000269" key="6">
    <source>
    </source>
</evidence>
<evidence type="ECO:0000305" key="7"/>
<evidence type="ECO:0000305" key="8">
    <source>
    </source>
</evidence>
<evidence type="ECO:0000305" key="9">
    <source>
    </source>
</evidence>
<evidence type="ECO:0007829" key="10">
    <source>
        <dbReference type="PDB" id="2W5E"/>
    </source>
</evidence>
<feature type="chain" id="PRO_0000327325" description="Non-structural polyprotein 1A">
    <location>
        <begin position="1"/>
        <end position="935"/>
    </location>
</feature>
<feature type="chain" id="PRO_0000327326" description="Protein p19" evidence="2">
    <location>
        <begin position="1"/>
        <end position="175"/>
    </location>
</feature>
<feature type="chain" id="PRO_0000327327" description="Transmembrane protein 1A" evidence="2">
    <location>
        <begin position="176"/>
        <end position="419"/>
    </location>
</feature>
<feature type="chain" id="PRO_0000327328" description="Serine protease p27" evidence="2">
    <location>
        <begin position="420"/>
        <end position="664"/>
    </location>
</feature>
<feature type="chain" id="PRO_0000419595" description="Viral genome-linked protein" evidence="2">
    <location>
        <begin position="665"/>
        <end position="755"/>
    </location>
</feature>
<feature type="chain" id="PRO_0000327329" description="Protein p20'" evidence="2">
    <location>
        <begin position="756"/>
        <end position="935"/>
    </location>
</feature>
<feature type="transmembrane region" description="Helical" evidence="2">
    <location>
        <begin position="239"/>
        <end position="259"/>
    </location>
</feature>
<feature type="transmembrane region" description="Helical" evidence="2">
    <location>
        <begin position="286"/>
        <end position="306"/>
    </location>
</feature>
<feature type="transmembrane region" description="Helical" evidence="2">
    <location>
        <begin position="313"/>
        <end position="333"/>
    </location>
</feature>
<feature type="transmembrane region" description="Helical" evidence="2">
    <location>
        <begin position="344"/>
        <end position="364"/>
    </location>
</feature>
<feature type="region of interest" description="Disordered" evidence="3">
    <location>
        <begin position="756"/>
        <end position="828"/>
    </location>
</feature>
<feature type="region of interest" description="Disordered" evidence="3">
    <location>
        <begin position="915"/>
        <end position="935"/>
    </location>
</feature>
<feature type="coiled-coil region" evidence="2">
    <location>
        <begin position="104"/>
        <end position="142"/>
    </location>
</feature>
<feature type="coiled-coil region" evidence="2">
    <location>
        <begin position="587"/>
        <end position="620"/>
    </location>
</feature>
<feature type="compositionally biased region" description="Low complexity" evidence="3">
    <location>
        <begin position="922"/>
        <end position="935"/>
    </location>
</feature>
<feature type="active site" description="Charge relay system; for serine protease activity" evidence="5">
    <location>
        <position position="461"/>
    </location>
</feature>
<feature type="active site" description="Charge relay system; for serine protease activity" evidence="5">
    <location>
        <position position="489"/>
    </location>
</feature>
<feature type="active site" description="Charge relay system; for serine protease activity" evidence="5">
    <location>
        <position position="551"/>
    </location>
</feature>
<feature type="site" description="Cleavage" evidence="2">
    <location>
        <begin position="175"/>
        <end position="176"/>
    </location>
</feature>
<feature type="site" description="Cleavage" evidence="2">
    <location>
        <begin position="419"/>
        <end position="420"/>
    </location>
</feature>
<feature type="site" description="Cleavage" evidence="8">
    <location>
        <begin position="664"/>
        <end position="665"/>
    </location>
</feature>
<feature type="site" description="Cleavage" evidence="2">
    <location>
        <begin position="755"/>
        <end position="756"/>
    </location>
</feature>
<feature type="modified residue" description="O-(5'-phospho-RNA)-tyrosine" evidence="1">
    <location>
        <position position="693"/>
    </location>
</feature>
<feature type="sequence variant" description="In strain: Dresden.">
    <original>Y</original>
    <variation>H</variation>
    <location>
        <position position="3"/>
    </location>
</feature>
<feature type="sequence variant" description="In strain: Oxford.">
    <original>T</original>
    <variation>I</variation>
    <location>
        <position position="33"/>
    </location>
</feature>
<feature type="sequence variant" description="In strain: Dresden.">
    <original>K</original>
    <variation>T</variation>
    <location>
        <position position="37"/>
    </location>
</feature>
<feature type="sequence variant" description="In strain: Dresden.">
    <original>AFDGKEWVG</original>
    <variation>VFDGREWVE</variation>
    <location>
        <begin position="82"/>
        <end position="90"/>
    </location>
</feature>
<feature type="sequence variant" description="In strain: Dresden.">
    <original>V</original>
    <variation>I</variation>
    <location>
        <position position="138"/>
    </location>
</feature>
<feature type="sequence variant" description="In strain: Dresden.">
    <original>M</original>
    <variation>L</variation>
    <location>
        <position position="143"/>
    </location>
</feature>
<feature type="sequence variant" description="In strain: Dresden.">
    <original>M</original>
    <variation>V</variation>
    <location>
        <position position="159"/>
    </location>
</feature>
<feature type="sequence variant" description="In strain: Dresden.">
    <original>HS</original>
    <variation>QR</variation>
    <location>
        <begin position="175"/>
        <end position="176"/>
    </location>
</feature>
<feature type="sequence variant" description="In strain: Dresden.">
    <original>I</original>
    <variation>V</variation>
    <location>
        <position position="187"/>
    </location>
</feature>
<feature type="sequence variant" description="In strain: Dresden.">
    <original>T</original>
    <variation>S</variation>
    <location>
        <position position="196"/>
    </location>
</feature>
<feature type="sequence variant" description="In strain: Oxford.">
    <original>R</original>
    <variation>G</variation>
    <location>
        <position position="263"/>
    </location>
</feature>
<feature type="sequence variant" description="In strain: Dresden.">
    <original>V</original>
    <variation>I</variation>
    <location>
        <position position="272"/>
    </location>
</feature>
<feature type="sequence variant" description="In strain: Dresden.">
    <original>I</original>
    <variation>T</variation>
    <location>
        <position position="290"/>
    </location>
</feature>
<feature type="sequence variant" description="In strain: Dresden.">
    <original>N</original>
    <variation>S</variation>
    <location>
        <position position="312"/>
    </location>
</feature>
<feature type="sequence variant" description="In strain: Dresden.">
    <original>L</original>
    <variation>M</variation>
    <location>
        <position position="318"/>
    </location>
</feature>
<feature type="sequence variant" description="In strain: Dresden.">
    <original>L</original>
    <variation>I</variation>
    <location>
        <position position="493"/>
    </location>
</feature>
<feature type="sequence variant" description="In strain: Oxford.">
    <original>L</original>
    <variation>V</variation>
    <location>
        <position position="493"/>
    </location>
</feature>
<feature type="sequence variant" description="In strain: Dresden.">
    <original>H</original>
    <variation>Y</variation>
    <location>
        <position position="536"/>
    </location>
</feature>
<feature type="sequence variant" description="In strain: Dresden.">
    <original>G</original>
    <variation>C</variation>
    <location>
        <position position="560"/>
    </location>
</feature>
<feature type="sequence variant" description="In strain: Dresden.">
    <original>A</original>
    <variation>T</variation>
    <location>
        <position position="582"/>
    </location>
</feature>
<feature type="sequence variant" description="In strain: Dresden.">
    <original>L</original>
    <variation>M</variation>
    <location>
        <position position="595"/>
    </location>
</feature>
<feature type="sequence variant" description="In strain: Dresden.">
    <original>TENATTV</original>
    <variation>AENSVTA</variation>
    <location>
        <begin position="611"/>
        <end position="617"/>
    </location>
</feature>
<feature type="sequence variant" description="In strain: Oxford.">
    <original>A</original>
    <variation>V</variation>
    <location>
        <position position="614"/>
    </location>
</feature>
<feature type="sequence variant" description="In strain: Dresden.">
    <original>SAALE</original>
    <variation>IVTLD</variation>
    <location>
        <begin position="623"/>
        <end position="627"/>
    </location>
</feature>
<feature type="sequence variant" description="In strain: Oxford.">
    <original>A</original>
    <variation>V</variation>
    <location>
        <position position="624"/>
    </location>
</feature>
<feature type="sequence variant" description="In strain: Dresden.">
    <original>L</original>
    <variation>S</variation>
    <location>
        <position position="651"/>
    </location>
</feature>
<feature type="sequence variant" description="In strain: Dresden.">
    <original>L</original>
    <variation>P</variation>
    <location>
        <position position="659"/>
    </location>
</feature>
<feature type="sequence variant" description="In strain: Dresden.">
    <original>I</original>
    <variation>T</variation>
    <location>
        <position position="759"/>
    </location>
</feature>
<feature type="sequence variant" description="In strain: Oxford.">
    <original>P</original>
    <variation>L</variation>
    <location>
        <position position="762"/>
    </location>
</feature>
<feature type="sequence variant" description="In strain: Dresden.">
    <original>TKQ</original>
    <variation>IKP</variation>
    <location>
        <begin position="765"/>
        <end position="767"/>
    </location>
</feature>
<feature type="sequence variant" description="In strain: Oxford.">
    <original>QKI</original>
    <variation>PKT</variation>
    <location>
        <begin position="767"/>
        <end position="769"/>
    </location>
</feature>
<feature type="sequence variant" description="In strain: Dresden.">
    <original>VES</original>
    <variation>AET</variation>
    <location>
        <begin position="775"/>
        <end position="777"/>
    </location>
</feature>
<feature type="sequence variant" description="In strain: Oxford.">
    <original>SEY</original>
    <variation>PEH</variation>
    <location>
        <begin position="790"/>
        <end position="792"/>
    </location>
</feature>
<feature type="sequence variant" description="In strain: Oxford.">
    <location>
        <begin position="800"/>
        <end position="814"/>
    </location>
</feature>
<feature type="sequence variant" description="In strain: Dresden.">
    <original>QLEHEQQVVKPIKPQKS</original>
    <variation>KN</variation>
    <location>
        <begin position="804"/>
        <end position="820"/>
    </location>
</feature>
<feature type="sequence variant" description="In strain: Oxford.">
    <original>D</original>
    <variation>N</variation>
    <location>
        <position position="843"/>
    </location>
</feature>
<feature type="sequence variant" description="In strain: Dresden.">
    <original>T</original>
    <variation>I</variation>
    <location>
        <position position="932"/>
    </location>
</feature>
<feature type="mutagenesis site" description="Complete loss of protease enzymatic activity." evidence="5">
    <original>S</original>
    <variation>A</variation>
    <location>
        <position position="551"/>
    </location>
</feature>
<name>NS1A_HASV1</name>
<reference key="1">
    <citation type="journal article" date="1994" name="J. Gen. Virol.">
        <title>The complete sequence of a human astrovirus.</title>
        <authorList>
            <person name="Willcocks M.M."/>
            <person name="Brown T.D."/>
            <person name="Madeley C.R."/>
            <person name="Carter M.J."/>
        </authorList>
    </citation>
    <scope>NUCLEOTIDE SEQUENCE [GENOMIC RNA]</scope>
    <source>
        <strain>Isolate Newcastle</strain>
    </source>
</reference>
<reference key="2">
    <citation type="journal article" date="1994" name="J. Virol.">
        <title>Analysis of astrovirus serotype 1 RNA, identification of the viral RNA-dependent RNA polymerase motif, and expression of a viral structural protein.</title>
        <authorList>
            <person name="Lewis T.L."/>
            <person name="Greenberg H.B."/>
            <person name="Herrmann J.E."/>
            <person name="Smith L.S."/>
            <person name="Matsui S.M."/>
        </authorList>
    </citation>
    <scope>NUCLEOTIDE SEQUENCE [GENOMIC RNA]</scope>
    <scope>RIBOSOMAL FRAMESHIFT</scope>
    <source>
        <strain>Oxford</strain>
    </source>
</reference>
<reference key="3">
    <citation type="submission" date="2004-08" db="EMBL/GenBank/DDBJ databases">
        <title>Molecular characterization of the human astrovirus type 1 strain Dresden.</title>
        <authorList>
            <person name="Barthel J."/>
            <person name="Rethwilm A."/>
            <person name="Rohayem J."/>
        </authorList>
    </citation>
    <scope>NUCLEOTIDE SEQUENCE [GENOMIC DNA]</scope>
    <source>
        <strain>Dresden</strain>
    </source>
</reference>
<reference key="4">
    <citation type="journal article" date="2002" name="J. Virol.">
        <title>Processing of nonstructural protein 1a of human astrovirus.</title>
        <authorList>
            <person name="Geigenmuller U."/>
            <person name="Chew T."/>
            <person name="Ginzton N."/>
            <person name="Matsui S.M."/>
        </authorList>
    </citation>
    <scope>PROTEOLYTIC PROCESSING (NON-STRUCTURAL POLYPROTEIN 1A)</scope>
</reference>
<reference evidence="10" key="5">
    <citation type="journal article" date="2009" name="J. Mol. Biol.">
        <title>Structural and biochemical analysis of human pathogenic astrovirus serine protease at 2.0 A resolution.</title>
        <authorList>
            <person name="Speroni S."/>
            <person name="Rohayem J."/>
            <person name="Nenci S."/>
            <person name="Bonivento D."/>
            <person name="Robel I."/>
            <person name="Barthel J."/>
            <person name="Luzhkov V.B."/>
            <person name="Coutard B."/>
            <person name="Canard B."/>
            <person name="Mattevi A."/>
        </authorList>
    </citation>
    <scope>X-RAY CRYSTALLOGRAPHY (2.00 ANGSTROMS) OF 432-587</scope>
    <scope>FUNCTION (SERINE PROTEASE P27)</scope>
    <scope>ACTIVE SITE (SERINE PROTEASE P27)</scope>
    <scope>SUBUNIT (SERINE PROTEASE P27)</scope>
    <scope>CATALYTIC ACTIVITY (SERINE PROTEASE P27)</scope>
    <scope>MUTAGENESIS OF SER-551</scope>
    <source>
        <strain>Dresden</strain>
    </source>
</reference>
<organismHost>
    <name type="scientific">Homo sapiens</name>
    <name type="common">Human</name>
    <dbReference type="NCBI Taxonomy" id="9606"/>
</organismHost>
<accession>P0C6K4</accession>
<accession>Q3ZN04</accession>
<accession>Q82450</accession>
<proteinExistence type="evidence at protein level"/>